<name>FLAV_ECO57</name>
<reference key="1">
    <citation type="journal article" date="2001" name="Nature">
        <title>Genome sequence of enterohaemorrhagic Escherichia coli O157:H7.</title>
        <authorList>
            <person name="Perna N.T."/>
            <person name="Plunkett G. III"/>
            <person name="Burland V."/>
            <person name="Mau B."/>
            <person name="Glasner J.D."/>
            <person name="Rose D.J."/>
            <person name="Mayhew G.F."/>
            <person name="Evans P.S."/>
            <person name="Gregor J."/>
            <person name="Kirkpatrick H.A."/>
            <person name="Posfai G."/>
            <person name="Hackett J."/>
            <person name="Klink S."/>
            <person name="Boutin A."/>
            <person name="Shao Y."/>
            <person name="Miller L."/>
            <person name="Grotbeck E.J."/>
            <person name="Davis N.W."/>
            <person name="Lim A."/>
            <person name="Dimalanta E.T."/>
            <person name="Potamousis K."/>
            <person name="Apodaca J."/>
            <person name="Anantharaman T.S."/>
            <person name="Lin J."/>
            <person name="Yen G."/>
            <person name="Schwartz D.C."/>
            <person name="Welch R.A."/>
            <person name="Blattner F.R."/>
        </authorList>
    </citation>
    <scope>NUCLEOTIDE SEQUENCE [LARGE SCALE GENOMIC DNA]</scope>
    <source>
        <strain>O157:H7 / EDL933 / ATCC 700927 / EHEC</strain>
    </source>
</reference>
<reference key="2">
    <citation type="journal article" date="2001" name="DNA Res.">
        <title>Complete genome sequence of enterohemorrhagic Escherichia coli O157:H7 and genomic comparison with a laboratory strain K-12.</title>
        <authorList>
            <person name="Hayashi T."/>
            <person name="Makino K."/>
            <person name="Ohnishi M."/>
            <person name="Kurokawa K."/>
            <person name="Ishii K."/>
            <person name="Yokoyama K."/>
            <person name="Han C.-G."/>
            <person name="Ohtsubo E."/>
            <person name="Nakayama K."/>
            <person name="Murata T."/>
            <person name="Tanaka M."/>
            <person name="Tobe T."/>
            <person name="Iida T."/>
            <person name="Takami H."/>
            <person name="Honda T."/>
            <person name="Sasakawa C."/>
            <person name="Ogasawara N."/>
            <person name="Yasunaga T."/>
            <person name="Kuhara S."/>
            <person name="Shiba T."/>
            <person name="Hattori M."/>
            <person name="Shinagawa H."/>
        </authorList>
    </citation>
    <scope>NUCLEOTIDE SEQUENCE [LARGE SCALE GENOMIC DNA]</scope>
    <source>
        <strain>O157:H7 / Sakai / RIMD 0509952 / EHEC</strain>
    </source>
</reference>
<organism>
    <name type="scientific">Escherichia coli O157:H7</name>
    <dbReference type="NCBI Taxonomy" id="83334"/>
    <lineage>
        <taxon>Bacteria</taxon>
        <taxon>Pseudomonadati</taxon>
        <taxon>Pseudomonadota</taxon>
        <taxon>Gammaproteobacteria</taxon>
        <taxon>Enterobacterales</taxon>
        <taxon>Enterobacteriaceae</taxon>
        <taxon>Escherichia</taxon>
    </lineage>
</organism>
<comment type="function">
    <text evidence="1 3">Low-potential electron donor to a number of redox enzymes (Potential). Involved in the reactivation of inactive cob(II)alamin in methionine synthase (By similarity).</text>
</comment>
<comment type="cofactor">
    <cofactor evidence="1">
        <name>FMN</name>
        <dbReference type="ChEBI" id="CHEBI:58210"/>
    </cofactor>
</comment>
<comment type="similarity">
    <text evidence="3">Belongs to the flavodoxin family.</text>
</comment>
<gene>
    <name type="primary">fldA</name>
    <name type="ordered locus">Z0832</name>
    <name type="ordered locus">ECs0715</name>
</gene>
<proteinExistence type="inferred from homology"/>
<feature type="initiator methionine" description="Removed" evidence="1">
    <location>
        <position position="1"/>
    </location>
</feature>
<feature type="chain" id="PRO_0000171624" description="Flavodoxin 1">
    <location>
        <begin position="2"/>
        <end position="176"/>
    </location>
</feature>
<feature type="domain" description="Flavodoxin-like" evidence="2">
    <location>
        <begin position="4"/>
        <end position="165"/>
    </location>
</feature>
<keyword id="KW-0249">Electron transport</keyword>
<keyword id="KW-0285">Flavoprotein</keyword>
<keyword id="KW-0288">FMN</keyword>
<keyword id="KW-1185">Reference proteome</keyword>
<keyword id="KW-0813">Transport</keyword>
<accession>P61951</accession>
<accession>P23243</accession>
<protein>
    <recommendedName>
        <fullName>Flavodoxin 1</fullName>
    </recommendedName>
</protein>
<dbReference type="EMBL" id="AE005174">
    <property type="protein sequence ID" value="AAG55007.1"/>
    <property type="molecule type" value="Genomic_DNA"/>
</dbReference>
<dbReference type="EMBL" id="BA000007">
    <property type="protein sequence ID" value="BAB34138.1"/>
    <property type="molecule type" value="Genomic_DNA"/>
</dbReference>
<dbReference type="PIR" id="C85568">
    <property type="entry name" value="C85568"/>
</dbReference>
<dbReference type="PIR" id="C90718">
    <property type="entry name" value="C90718"/>
</dbReference>
<dbReference type="RefSeq" id="NP_308742.1">
    <property type="nucleotide sequence ID" value="NC_002695.1"/>
</dbReference>
<dbReference type="RefSeq" id="WP_001018618.1">
    <property type="nucleotide sequence ID" value="NZ_VOAI01000012.1"/>
</dbReference>
<dbReference type="BMRB" id="P61951"/>
<dbReference type="SMR" id="P61951"/>
<dbReference type="STRING" id="155864.Z0832"/>
<dbReference type="GeneID" id="917084"/>
<dbReference type="GeneID" id="93776800"/>
<dbReference type="KEGG" id="ece:Z0832"/>
<dbReference type="KEGG" id="ecs:ECs_0715"/>
<dbReference type="PATRIC" id="fig|386585.9.peg.831"/>
<dbReference type="eggNOG" id="COG0716">
    <property type="taxonomic scope" value="Bacteria"/>
</dbReference>
<dbReference type="HOGENOM" id="CLU_051402_1_1_6"/>
<dbReference type="OMA" id="ICGIPTW"/>
<dbReference type="Proteomes" id="UP000000558">
    <property type="component" value="Chromosome"/>
</dbReference>
<dbReference type="Proteomes" id="UP000002519">
    <property type="component" value="Chromosome"/>
</dbReference>
<dbReference type="GO" id="GO:0009055">
    <property type="term" value="F:electron transfer activity"/>
    <property type="evidence" value="ECO:0007669"/>
    <property type="project" value="InterPro"/>
</dbReference>
<dbReference type="GO" id="GO:0010181">
    <property type="term" value="F:FMN binding"/>
    <property type="evidence" value="ECO:0007669"/>
    <property type="project" value="InterPro"/>
</dbReference>
<dbReference type="FunFam" id="3.40.50.360:FF:000002">
    <property type="entry name" value="Flavodoxin"/>
    <property type="match status" value="1"/>
</dbReference>
<dbReference type="Gene3D" id="3.40.50.360">
    <property type="match status" value="1"/>
</dbReference>
<dbReference type="InterPro" id="IPR050619">
    <property type="entry name" value="Flavodoxin"/>
</dbReference>
<dbReference type="InterPro" id="IPR008254">
    <property type="entry name" value="Flavodoxin/NO_synth"/>
</dbReference>
<dbReference type="InterPro" id="IPR001226">
    <property type="entry name" value="Flavodoxin_CS"/>
</dbReference>
<dbReference type="InterPro" id="IPR010086">
    <property type="entry name" value="Flavodoxin_lc"/>
</dbReference>
<dbReference type="InterPro" id="IPR029039">
    <property type="entry name" value="Flavoprotein-like_sf"/>
</dbReference>
<dbReference type="NCBIfam" id="TIGR01752">
    <property type="entry name" value="flav_long"/>
    <property type="match status" value="1"/>
</dbReference>
<dbReference type="NCBIfam" id="NF006735">
    <property type="entry name" value="PRK09267.1-1"/>
    <property type="match status" value="1"/>
</dbReference>
<dbReference type="NCBIfam" id="NF006736">
    <property type="entry name" value="PRK09267.1-2"/>
    <property type="match status" value="1"/>
</dbReference>
<dbReference type="NCBIfam" id="NF006737">
    <property type="entry name" value="PRK09267.1-3"/>
    <property type="match status" value="1"/>
</dbReference>
<dbReference type="NCBIfam" id="NF006739">
    <property type="entry name" value="PRK09267.1-5"/>
    <property type="match status" value="1"/>
</dbReference>
<dbReference type="PANTHER" id="PTHR42809:SF1">
    <property type="entry name" value="FLAVODOXIN 1"/>
    <property type="match status" value="1"/>
</dbReference>
<dbReference type="PANTHER" id="PTHR42809">
    <property type="entry name" value="FLAVODOXIN 2"/>
    <property type="match status" value="1"/>
</dbReference>
<dbReference type="Pfam" id="PF00258">
    <property type="entry name" value="Flavodoxin_1"/>
    <property type="match status" value="1"/>
</dbReference>
<dbReference type="PIRSF" id="PIRSF038996">
    <property type="entry name" value="FldA"/>
    <property type="match status" value="1"/>
</dbReference>
<dbReference type="SUPFAM" id="SSF52218">
    <property type="entry name" value="Flavoproteins"/>
    <property type="match status" value="1"/>
</dbReference>
<dbReference type="PROSITE" id="PS00201">
    <property type="entry name" value="FLAVODOXIN"/>
    <property type="match status" value="1"/>
</dbReference>
<dbReference type="PROSITE" id="PS50902">
    <property type="entry name" value="FLAVODOXIN_LIKE"/>
    <property type="match status" value="1"/>
</dbReference>
<sequence>MAITGIFFGSDTGNTENIAKMIQKQLGKDVADVHDIAKSSKEDLEAYDILLLGIPTWYYGEAQCDWDDFFPTLEEIDFNGKLVALFGCGDQEDYAEYFCDALGTIRDIIEPRGATIVGHWPTAGYHFEASKGLADDDHFVGLAIDEDRQPELTAERVEKWVKQISEELHLDEILNA</sequence>
<evidence type="ECO:0000250" key="1"/>
<evidence type="ECO:0000255" key="2">
    <source>
        <dbReference type="PROSITE-ProRule" id="PRU00088"/>
    </source>
</evidence>
<evidence type="ECO:0000305" key="3"/>